<sequence length="97" mass="8879">MTLFSSISSISNPMTSSKSSIASFGSGTSMSSNSNACGGGCGGGNGGILGLGLGLGLNLFGGSRSRGACGGNNGGSGNPGNGPFSGGSCCGSPCCGI</sequence>
<keyword id="KW-1185">Reference proteome</keyword>
<reference key="1">
    <citation type="journal article" date="2005" name="Nature">
        <title>The genome of the social amoeba Dictyostelium discoideum.</title>
        <authorList>
            <person name="Eichinger L."/>
            <person name="Pachebat J.A."/>
            <person name="Gloeckner G."/>
            <person name="Rajandream M.A."/>
            <person name="Sucgang R."/>
            <person name="Berriman M."/>
            <person name="Song J."/>
            <person name="Olsen R."/>
            <person name="Szafranski K."/>
            <person name="Xu Q."/>
            <person name="Tunggal B."/>
            <person name="Kummerfeld S."/>
            <person name="Madera M."/>
            <person name="Konfortov B.A."/>
            <person name="Rivero F."/>
            <person name="Bankier A.T."/>
            <person name="Lehmann R."/>
            <person name="Hamlin N."/>
            <person name="Davies R."/>
            <person name="Gaudet P."/>
            <person name="Fey P."/>
            <person name="Pilcher K."/>
            <person name="Chen G."/>
            <person name="Saunders D."/>
            <person name="Sodergren E.J."/>
            <person name="Davis P."/>
            <person name="Kerhornou A."/>
            <person name="Nie X."/>
            <person name="Hall N."/>
            <person name="Anjard C."/>
            <person name="Hemphill L."/>
            <person name="Bason N."/>
            <person name="Farbrother P."/>
            <person name="Desany B."/>
            <person name="Just E."/>
            <person name="Morio T."/>
            <person name="Rost R."/>
            <person name="Churcher C.M."/>
            <person name="Cooper J."/>
            <person name="Haydock S."/>
            <person name="van Driessche N."/>
            <person name="Cronin A."/>
            <person name="Goodhead I."/>
            <person name="Muzny D.M."/>
            <person name="Mourier T."/>
            <person name="Pain A."/>
            <person name="Lu M."/>
            <person name="Harper D."/>
            <person name="Lindsay R."/>
            <person name="Hauser H."/>
            <person name="James K.D."/>
            <person name="Quiles M."/>
            <person name="Madan Babu M."/>
            <person name="Saito T."/>
            <person name="Buchrieser C."/>
            <person name="Wardroper A."/>
            <person name="Felder M."/>
            <person name="Thangavelu M."/>
            <person name="Johnson D."/>
            <person name="Knights A."/>
            <person name="Loulseged H."/>
            <person name="Mungall K.L."/>
            <person name="Oliver K."/>
            <person name="Price C."/>
            <person name="Quail M.A."/>
            <person name="Urushihara H."/>
            <person name="Hernandez J."/>
            <person name="Rabbinowitsch E."/>
            <person name="Steffen D."/>
            <person name="Sanders M."/>
            <person name="Ma J."/>
            <person name="Kohara Y."/>
            <person name="Sharp S."/>
            <person name="Simmonds M.N."/>
            <person name="Spiegler S."/>
            <person name="Tivey A."/>
            <person name="Sugano S."/>
            <person name="White B."/>
            <person name="Walker D."/>
            <person name="Woodward J.R."/>
            <person name="Winckler T."/>
            <person name="Tanaka Y."/>
            <person name="Shaulsky G."/>
            <person name="Schleicher M."/>
            <person name="Weinstock G.M."/>
            <person name="Rosenthal A."/>
            <person name="Cox E.C."/>
            <person name="Chisholm R.L."/>
            <person name="Gibbs R.A."/>
            <person name="Loomis W.F."/>
            <person name="Platzer M."/>
            <person name="Kay R.R."/>
            <person name="Williams J.G."/>
            <person name="Dear P.H."/>
            <person name="Noegel A.A."/>
            <person name="Barrell B.G."/>
            <person name="Kuspa A."/>
        </authorList>
    </citation>
    <scope>NUCLEOTIDE SEQUENCE [LARGE SCALE GENOMIC DNA]</scope>
    <source>
        <strain>AX4</strain>
    </source>
</reference>
<organism>
    <name type="scientific">Dictyostelium discoideum</name>
    <name type="common">Social amoeba</name>
    <dbReference type="NCBI Taxonomy" id="44689"/>
    <lineage>
        <taxon>Eukaryota</taxon>
        <taxon>Amoebozoa</taxon>
        <taxon>Evosea</taxon>
        <taxon>Eumycetozoa</taxon>
        <taxon>Dictyostelia</taxon>
        <taxon>Dictyosteliales</taxon>
        <taxon>Dictyosteliaceae</taxon>
        <taxon>Dictyostelium</taxon>
    </lineage>
</organism>
<feature type="chain" id="PRO_0000330415" description="HssA/B-like protein 47">
    <location>
        <begin position="1"/>
        <end position="97"/>
    </location>
</feature>
<feature type="region of interest" description="Disordered" evidence="1">
    <location>
        <begin position="1"/>
        <end position="33"/>
    </location>
</feature>
<comment type="similarity">
    <text evidence="2">Belongs to the hssA/B family.</text>
</comment>
<gene>
    <name type="primary">hssl47</name>
    <name type="ORF">DDB_G0281007</name>
</gene>
<protein>
    <recommendedName>
        <fullName>HssA/B-like protein 47</fullName>
    </recommendedName>
</protein>
<dbReference type="EMBL" id="AAFI02000040">
    <property type="protein sequence ID" value="EAL66800.1"/>
    <property type="molecule type" value="Genomic_DNA"/>
</dbReference>
<dbReference type="RefSeq" id="XP_640764.1">
    <property type="nucleotide sequence ID" value="XM_635672.1"/>
</dbReference>
<dbReference type="PaxDb" id="44689-DDB0252784"/>
<dbReference type="EnsemblProtists" id="EAL66800">
    <property type="protein sequence ID" value="EAL66800"/>
    <property type="gene ID" value="DDB_G0281007"/>
</dbReference>
<dbReference type="GeneID" id="8622817"/>
<dbReference type="KEGG" id="ddi:DDB_G0281007"/>
<dbReference type="dictyBase" id="DDB_G0281007"/>
<dbReference type="HOGENOM" id="CLU_181850_0_0_1"/>
<dbReference type="InParanoid" id="Q54UL2"/>
<dbReference type="PRO" id="PR:Q54UL2"/>
<dbReference type="Proteomes" id="UP000002195">
    <property type="component" value="Chromosome 3"/>
</dbReference>
<dbReference type="GO" id="GO:0030587">
    <property type="term" value="P:sorocarp development"/>
    <property type="evidence" value="ECO:0000318"/>
    <property type="project" value="GO_Central"/>
</dbReference>
<dbReference type="InterPro" id="IPR050533">
    <property type="entry name" value="HssA/B-like_chaperone"/>
</dbReference>
<dbReference type="InterPro" id="IPR008455">
    <property type="entry name" value="HssA/B-related"/>
</dbReference>
<dbReference type="PANTHER" id="PTHR31059">
    <property type="entry name" value="HSSA/B-LIKE PROTEIN 1-RELATED-RELATED"/>
    <property type="match status" value="1"/>
</dbReference>
<dbReference type="PANTHER" id="PTHR31059:SF5">
    <property type="entry name" value="HSSA_B-LIKE PROTEIN 1-RELATED"/>
    <property type="match status" value="1"/>
</dbReference>
<dbReference type="Pfam" id="PF05710">
    <property type="entry name" value="Coiled"/>
    <property type="match status" value="1"/>
</dbReference>
<accession>Q54UL2</accession>
<name>HSL47_DICDI</name>
<evidence type="ECO:0000256" key="1">
    <source>
        <dbReference type="SAM" id="MobiDB-lite"/>
    </source>
</evidence>
<evidence type="ECO:0000305" key="2"/>
<proteinExistence type="inferred from homology"/>